<evidence type="ECO:0000255" key="1">
    <source>
        <dbReference type="HAMAP-Rule" id="MF_00435"/>
    </source>
</evidence>
<evidence type="ECO:0000255" key="2">
    <source>
        <dbReference type="PROSITE-ProRule" id="PRU01197"/>
    </source>
</evidence>
<evidence type="ECO:0000255" key="3">
    <source>
        <dbReference type="PROSITE-ProRule" id="PRU01198"/>
    </source>
</evidence>
<protein>
    <recommendedName>
        <fullName evidence="1">Ketol-acid reductoisomerase (NADP(+))</fullName>
        <shortName evidence="1">KARI</shortName>
        <ecNumber evidence="1">1.1.1.86</ecNumber>
    </recommendedName>
    <alternativeName>
        <fullName evidence="1">Acetohydroxy-acid isomeroreductase</fullName>
        <shortName evidence="1">AHIR</shortName>
    </alternativeName>
    <alternativeName>
        <fullName evidence="1">Alpha-keto-beta-hydroxylacyl reductoisomerase</fullName>
    </alternativeName>
    <alternativeName>
        <fullName evidence="1">Ketol-acid reductoisomerase type 1</fullName>
    </alternativeName>
    <alternativeName>
        <fullName evidence="1">Ketol-acid reductoisomerase type I</fullName>
    </alternativeName>
</protein>
<comment type="function">
    <text evidence="1">Involved in the biosynthesis of branched-chain amino acids (BCAA). Catalyzes an alkyl-migration followed by a ketol-acid reduction of (S)-2-acetolactate (S2AL) to yield (R)-2,3-dihydroxy-isovalerate. In the isomerase reaction, S2AL is rearranged via a Mg-dependent methyl migration to produce 3-hydroxy-3-methyl-2-ketobutyrate (HMKB). In the reductase reaction, this 2-ketoacid undergoes a metal-dependent reduction by NADPH to yield (R)-2,3-dihydroxy-isovalerate.</text>
</comment>
<comment type="catalytic activity">
    <reaction evidence="1">
        <text>(2R)-2,3-dihydroxy-3-methylbutanoate + NADP(+) = (2S)-2-acetolactate + NADPH + H(+)</text>
        <dbReference type="Rhea" id="RHEA:22068"/>
        <dbReference type="ChEBI" id="CHEBI:15378"/>
        <dbReference type="ChEBI" id="CHEBI:49072"/>
        <dbReference type="ChEBI" id="CHEBI:57783"/>
        <dbReference type="ChEBI" id="CHEBI:58349"/>
        <dbReference type="ChEBI" id="CHEBI:58476"/>
        <dbReference type="EC" id="1.1.1.86"/>
    </reaction>
</comment>
<comment type="catalytic activity">
    <reaction evidence="1">
        <text>(2R,3R)-2,3-dihydroxy-3-methylpentanoate + NADP(+) = (S)-2-ethyl-2-hydroxy-3-oxobutanoate + NADPH + H(+)</text>
        <dbReference type="Rhea" id="RHEA:13493"/>
        <dbReference type="ChEBI" id="CHEBI:15378"/>
        <dbReference type="ChEBI" id="CHEBI:49256"/>
        <dbReference type="ChEBI" id="CHEBI:49258"/>
        <dbReference type="ChEBI" id="CHEBI:57783"/>
        <dbReference type="ChEBI" id="CHEBI:58349"/>
        <dbReference type="EC" id="1.1.1.86"/>
    </reaction>
</comment>
<comment type="cofactor">
    <cofactor evidence="1">
        <name>Mg(2+)</name>
        <dbReference type="ChEBI" id="CHEBI:18420"/>
    </cofactor>
    <text evidence="1">Binds 2 magnesium ions per subunit.</text>
</comment>
<comment type="pathway">
    <text evidence="1">Amino-acid biosynthesis; L-isoleucine biosynthesis; L-isoleucine from 2-oxobutanoate: step 2/4.</text>
</comment>
<comment type="pathway">
    <text evidence="1">Amino-acid biosynthesis; L-valine biosynthesis; L-valine from pyruvate: step 2/4.</text>
</comment>
<comment type="similarity">
    <text evidence="1">Belongs to the ketol-acid reductoisomerase family.</text>
</comment>
<sequence length="337" mass="36408">MQVYYDKDADLSLIKGKTVAIIGYGSQGHAHAANLKDSGVNVVIGLRQGSSWKKAEAAGHVVKTVAEATKEADVVMLLLPDETMPAVYHAEVAANLKEGATLAFAHGFNVHYNQIVPRADLDVIMVAPKGPGHTVRSEYKRGGGVPSLIAVYQDNSGKAKDIALSYAAANGGTKGGVIETTFREETETDLFGEQAVLCGGVVELIKAGFETLTEAGYAPEMAYFECLHEMKLIVDLIFEGGIANMNYSISNNAEYGEYVTGPEVVNASSKEAMRNALKRIQTGEYAKMFIQEGNVNYASMTARRRLNADHQVEKVGAQLRAMMPWITANKLVDQDKN</sequence>
<feature type="chain" id="PRO_0000151331" description="Ketol-acid reductoisomerase (NADP(+))">
    <location>
        <begin position="1"/>
        <end position="337"/>
    </location>
</feature>
<feature type="domain" description="KARI N-terminal Rossmann" evidence="2">
    <location>
        <begin position="1"/>
        <end position="180"/>
    </location>
</feature>
<feature type="domain" description="KARI C-terminal knotted" evidence="3">
    <location>
        <begin position="181"/>
        <end position="326"/>
    </location>
</feature>
<feature type="active site" evidence="1">
    <location>
        <position position="106"/>
    </location>
</feature>
<feature type="binding site" evidence="1">
    <location>
        <begin position="24"/>
        <end position="27"/>
    </location>
    <ligand>
        <name>NADP(+)</name>
        <dbReference type="ChEBI" id="CHEBI:58349"/>
    </ligand>
</feature>
<feature type="binding site" evidence="1">
    <location>
        <position position="47"/>
    </location>
    <ligand>
        <name>NADP(+)</name>
        <dbReference type="ChEBI" id="CHEBI:58349"/>
    </ligand>
</feature>
<feature type="binding site" evidence="1">
    <location>
        <position position="51"/>
    </location>
    <ligand>
        <name>NADP(+)</name>
        <dbReference type="ChEBI" id="CHEBI:58349"/>
    </ligand>
</feature>
<feature type="binding site" evidence="1">
    <location>
        <position position="132"/>
    </location>
    <ligand>
        <name>NADP(+)</name>
        <dbReference type="ChEBI" id="CHEBI:58349"/>
    </ligand>
</feature>
<feature type="binding site" evidence="1">
    <location>
        <position position="189"/>
    </location>
    <ligand>
        <name>Mg(2+)</name>
        <dbReference type="ChEBI" id="CHEBI:18420"/>
        <label>1</label>
    </ligand>
</feature>
<feature type="binding site" evidence="1">
    <location>
        <position position="189"/>
    </location>
    <ligand>
        <name>Mg(2+)</name>
        <dbReference type="ChEBI" id="CHEBI:18420"/>
        <label>2</label>
    </ligand>
</feature>
<feature type="binding site" evidence="1">
    <location>
        <position position="193"/>
    </location>
    <ligand>
        <name>Mg(2+)</name>
        <dbReference type="ChEBI" id="CHEBI:18420"/>
        <label>1</label>
    </ligand>
</feature>
<feature type="binding site" evidence="1">
    <location>
        <position position="225"/>
    </location>
    <ligand>
        <name>Mg(2+)</name>
        <dbReference type="ChEBI" id="CHEBI:18420"/>
        <label>2</label>
    </ligand>
</feature>
<feature type="binding site" evidence="1">
    <location>
        <position position="229"/>
    </location>
    <ligand>
        <name>Mg(2+)</name>
        <dbReference type="ChEBI" id="CHEBI:18420"/>
        <label>2</label>
    </ligand>
</feature>
<feature type="binding site" evidence="1">
    <location>
        <position position="250"/>
    </location>
    <ligand>
        <name>substrate</name>
    </ligand>
</feature>
<accession>Q9JTI3</accession>
<accession>A1ISX8</accession>
<gene>
    <name evidence="1" type="primary">ilvC</name>
    <name type="ordered locus">NMA1763</name>
</gene>
<reference key="1">
    <citation type="journal article" date="2000" name="Nature">
        <title>Complete DNA sequence of a serogroup A strain of Neisseria meningitidis Z2491.</title>
        <authorList>
            <person name="Parkhill J."/>
            <person name="Achtman M."/>
            <person name="James K.D."/>
            <person name="Bentley S.D."/>
            <person name="Churcher C.M."/>
            <person name="Klee S.R."/>
            <person name="Morelli G."/>
            <person name="Basham D."/>
            <person name="Brown D."/>
            <person name="Chillingworth T."/>
            <person name="Davies R.M."/>
            <person name="Davis P."/>
            <person name="Devlin K."/>
            <person name="Feltwell T."/>
            <person name="Hamlin N."/>
            <person name="Holroyd S."/>
            <person name="Jagels K."/>
            <person name="Leather S."/>
            <person name="Moule S."/>
            <person name="Mungall K.L."/>
            <person name="Quail M.A."/>
            <person name="Rajandream M.A."/>
            <person name="Rutherford K.M."/>
            <person name="Simmonds M."/>
            <person name="Skelton J."/>
            <person name="Whitehead S."/>
            <person name="Spratt B.G."/>
            <person name="Barrell B.G."/>
        </authorList>
    </citation>
    <scope>NUCLEOTIDE SEQUENCE [LARGE SCALE GENOMIC DNA]</scope>
    <source>
        <strain>DSM 15465 / Z2491</strain>
    </source>
</reference>
<keyword id="KW-0028">Amino-acid biosynthesis</keyword>
<keyword id="KW-0100">Branched-chain amino acid biosynthesis</keyword>
<keyword id="KW-0460">Magnesium</keyword>
<keyword id="KW-0479">Metal-binding</keyword>
<keyword id="KW-0521">NADP</keyword>
<keyword id="KW-0560">Oxidoreductase</keyword>
<proteinExistence type="inferred from homology"/>
<organism>
    <name type="scientific">Neisseria meningitidis serogroup A / serotype 4A (strain DSM 15465 / Z2491)</name>
    <dbReference type="NCBI Taxonomy" id="122587"/>
    <lineage>
        <taxon>Bacteria</taxon>
        <taxon>Pseudomonadati</taxon>
        <taxon>Pseudomonadota</taxon>
        <taxon>Betaproteobacteria</taxon>
        <taxon>Neisseriales</taxon>
        <taxon>Neisseriaceae</taxon>
        <taxon>Neisseria</taxon>
    </lineage>
</organism>
<dbReference type="EC" id="1.1.1.86" evidence="1"/>
<dbReference type="EMBL" id="AL157959">
    <property type="protein sequence ID" value="CAM08890.1"/>
    <property type="molecule type" value="Genomic_DNA"/>
</dbReference>
<dbReference type="PIR" id="C81801">
    <property type="entry name" value="C81801"/>
</dbReference>
<dbReference type="RefSeq" id="WP_002226185.1">
    <property type="nucleotide sequence ID" value="NC_003116.1"/>
</dbReference>
<dbReference type="SMR" id="Q9JTI3"/>
<dbReference type="EnsemblBacteria" id="CAM08890">
    <property type="protein sequence ID" value="CAM08890"/>
    <property type="gene ID" value="NMA1763"/>
</dbReference>
<dbReference type="GeneID" id="93387814"/>
<dbReference type="KEGG" id="nma:NMA1763"/>
<dbReference type="HOGENOM" id="CLU_033821_0_1_4"/>
<dbReference type="UniPathway" id="UPA00047">
    <property type="reaction ID" value="UER00056"/>
</dbReference>
<dbReference type="UniPathway" id="UPA00049">
    <property type="reaction ID" value="UER00060"/>
</dbReference>
<dbReference type="Proteomes" id="UP000000626">
    <property type="component" value="Chromosome"/>
</dbReference>
<dbReference type="GO" id="GO:0005829">
    <property type="term" value="C:cytosol"/>
    <property type="evidence" value="ECO:0007669"/>
    <property type="project" value="TreeGrafter"/>
</dbReference>
<dbReference type="GO" id="GO:0004455">
    <property type="term" value="F:ketol-acid reductoisomerase activity"/>
    <property type="evidence" value="ECO:0007669"/>
    <property type="project" value="UniProtKB-UniRule"/>
</dbReference>
<dbReference type="GO" id="GO:0000287">
    <property type="term" value="F:magnesium ion binding"/>
    <property type="evidence" value="ECO:0007669"/>
    <property type="project" value="UniProtKB-UniRule"/>
</dbReference>
<dbReference type="GO" id="GO:0050661">
    <property type="term" value="F:NADP binding"/>
    <property type="evidence" value="ECO:0007669"/>
    <property type="project" value="InterPro"/>
</dbReference>
<dbReference type="GO" id="GO:0009097">
    <property type="term" value="P:isoleucine biosynthetic process"/>
    <property type="evidence" value="ECO:0007669"/>
    <property type="project" value="UniProtKB-UniRule"/>
</dbReference>
<dbReference type="GO" id="GO:0009099">
    <property type="term" value="P:L-valine biosynthetic process"/>
    <property type="evidence" value="ECO:0007669"/>
    <property type="project" value="UniProtKB-UniRule"/>
</dbReference>
<dbReference type="FunFam" id="3.40.50.720:FF:000023">
    <property type="entry name" value="Ketol-acid reductoisomerase (NADP(+))"/>
    <property type="match status" value="1"/>
</dbReference>
<dbReference type="Gene3D" id="6.10.240.10">
    <property type="match status" value="1"/>
</dbReference>
<dbReference type="Gene3D" id="3.40.50.720">
    <property type="entry name" value="NAD(P)-binding Rossmann-like Domain"/>
    <property type="match status" value="1"/>
</dbReference>
<dbReference type="HAMAP" id="MF_00435">
    <property type="entry name" value="IlvC"/>
    <property type="match status" value="1"/>
</dbReference>
<dbReference type="InterPro" id="IPR008927">
    <property type="entry name" value="6-PGluconate_DH-like_C_sf"/>
</dbReference>
<dbReference type="InterPro" id="IPR013023">
    <property type="entry name" value="KARI"/>
</dbReference>
<dbReference type="InterPro" id="IPR000506">
    <property type="entry name" value="KARI_C"/>
</dbReference>
<dbReference type="InterPro" id="IPR013116">
    <property type="entry name" value="KARI_N"/>
</dbReference>
<dbReference type="InterPro" id="IPR014359">
    <property type="entry name" value="KARI_prok"/>
</dbReference>
<dbReference type="InterPro" id="IPR036291">
    <property type="entry name" value="NAD(P)-bd_dom_sf"/>
</dbReference>
<dbReference type="NCBIfam" id="TIGR00465">
    <property type="entry name" value="ilvC"/>
    <property type="match status" value="1"/>
</dbReference>
<dbReference type="NCBIfam" id="NF004017">
    <property type="entry name" value="PRK05479.1"/>
    <property type="match status" value="1"/>
</dbReference>
<dbReference type="NCBIfam" id="NF009940">
    <property type="entry name" value="PRK13403.1"/>
    <property type="match status" value="1"/>
</dbReference>
<dbReference type="PANTHER" id="PTHR21371">
    <property type="entry name" value="KETOL-ACID REDUCTOISOMERASE, MITOCHONDRIAL"/>
    <property type="match status" value="1"/>
</dbReference>
<dbReference type="PANTHER" id="PTHR21371:SF1">
    <property type="entry name" value="KETOL-ACID REDUCTOISOMERASE, MITOCHONDRIAL"/>
    <property type="match status" value="1"/>
</dbReference>
<dbReference type="Pfam" id="PF01450">
    <property type="entry name" value="KARI_C"/>
    <property type="match status" value="1"/>
</dbReference>
<dbReference type="Pfam" id="PF07991">
    <property type="entry name" value="KARI_N"/>
    <property type="match status" value="1"/>
</dbReference>
<dbReference type="PIRSF" id="PIRSF000116">
    <property type="entry name" value="IlvC_gammaproteo"/>
    <property type="match status" value="1"/>
</dbReference>
<dbReference type="SUPFAM" id="SSF48179">
    <property type="entry name" value="6-phosphogluconate dehydrogenase C-terminal domain-like"/>
    <property type="match status" value="1"/>
</dbReference>
<dbReference type="SUPFAM" id="SSF51735">
    <property type="entry name" value="NAD(P)-binding Rossmann-fold domains"/>
    <property type="match status" value="1"/>
</dbReference>
<dbReference type="PROSITE" id="PS51851">
    <property type="entry name" value="KARI_C"/>
    <property type="match status" value="1"/>
</dbReference>
<dbReference type="PROSITE" id="PS51850">
    <property type="entry name" value="KARI_N"/>
    <property type="match status" value="1"/>
</dbReference>
<name>ILVC_NEIMA</name>